<protein>
    <recommendedName>
        <fullName evidence="5">Decapping and exoribonuclease protein Rai1</fullName>
        <shortName evidence="5">DXO</shortName>
        <ecNumber evidence="3">3.1.13.-</ecNumber>
        <ecNumber evidence="3">3.6.1.-</ecNumber>
    </recommendedName>
    <alternativeName>
        <fullName evidence="5">Dom-3 homolog Z</fullName>
        <shortName evidence="5">Dom3Z</shortName>
    </alternativeName>
    <alternativeName>
        <fullName evidence="5">NAD-capped RNA hydrolase</fullName>
        <shortName evidence="5">DeNADding enzyme</shortName>
    </alternativeName>
</protein>
<dbReference type="EC" id="3.1.13.-" evidence="3"/>
<dbReference type="EC" id="3.6.1.-" evidence="3"/>
<dbReference type="EMBL" id="FM246164">
    <property type="protein sequence ID" value="CAR94090.1"/>
    <property type="molecule type" value="Genomic_DNA"/>
</dbReference>
<dbReference type="EMBL" id="AE014298">
    <property type="protein sequence ID" value="AAF48669.1"/>
    <property type="molecule type" value="Genomic_DNA"/>
</dbReference>
<dbReference type="EMBL" id="BT125074">
    <property type="protein sequence ID" value="ADK95192.1"/>
    <property type="molecule type" value="mRNA"/>
</dbReference>
<dbReference type="RefSeq" id="NP_996492.1">
    <property type="nucleotide sequence ID" value="NM_206769.3"/>
</dbReference>
<dbReference type="SMR" id="Q9VXA8"/>
<dbReference type="BioGRID" id="77731">
    <property type="interactions" value="2"/>
</dbReference>
<dbReference type="FunCoup" id="Q9VXA8">
    <property type="interactions" value="934"/>
</dbReference>
<dbReference type="STRING" id="7227.FBpp0074126"/>
<dbReference type="PaxDb" id="7227-FBpp0074126"/>
<dbReference type="DNASU" id="2768882"/>
<dbReference type="EnsemblMetazoa" id="FBtr0074352">
    <property type="protein sequence ID" value="FBpp0074126"/>
    <property type="gene ID" value="FBgn0030793"/>
</dbReference>
<dbReference type="GeneID" id="2768882"/>
<dbReference type="KEGG" id="dme:Dmel_CG9125"/>
<dbReference type="UCSC" id="CG9125-RA">
    <property type="organism name" value="d. melanogaster"/>
</dbReference>
<dbReference type="AGR" id="FB:FBgn0030793"/>
<dbReference type="CTD" id="10743"/>
<dbReference type="FlyBase" id="FBgn0030793">
    <property type="gene designation" value="Rai1"/>
</dbReference>
<dbReference type="VEuPathDB" id="VectorBase:FBgn0030793"/>
<dbReference type="eggNOG" id="KOG1982">
    <property type="taxonomic scope" value="Eukaryota"/>
</dbReference>
<dbReference type="GeneTree" id="ENSGT00390000006425"/>
<dbReference type="HOGENOM" id="CLU_024877_1_1_1"/>
<dbReference type="InParanoid" id="Q9VXA8"/>
<dbReference type="OMA" id="ACTPYEN"/>
<dbReference type="OrthoDB" id="5853397at2759"/>
<dbReference type="PhylomeDB" id="Q9VXA8"/>
<dbReference type="BioGRID-ORCS" id="2768882">
    <property type="hits" value="0 hits in 1 CRISPR screen"/>
</dbReference>
<dbReference type="ChiTaRS" id="CG9125">
    <property type="organism name" value="fly"/>
</dbReference>
<dbReference type="GenomeRNAi" id="2768882"/>
<dbReference type="PRO" id="PR:Q9VXA8"/>
<dbReference type="Proteomes" id="UP000000803">
    <property type="component" value="Chromosome X"/>
</dbReference>
<dbReference type="Bgee" id="FBgn0030793">
    <property type="expression patterns" value="Expressed in T neuron T4a (Drosophila) in embryonic/larval optic lobe (Drosophila) and 52 other cell types or tissues"/>
</dbReference>
<dbReference type="ExpressionAtlas" id="Q9VXA8">
    <property type="expression patterns" value="baseline and differential"/>
</dbReference>
<dbReference type="GO" id="GO:0005829">
    <property type="term" value="C:cytosol"/>
    <property type="evidence" value="ECO:0000318"/>
    <property type="project" value="GO_Central"/>
</dbReference>
<dbReference type="GO" id="GO:0005634">
    <property type="term" value="C:nucleus"/>
    <property type="evidence" value="ECO:0000250"/>
    <property type="project" value="FlyBase"/>
</dbReference>
<dbReference type="GO" id="GO:0004534">
    <property type="term" value="F:5'-3' RNA exonuclease activity"/>
    <property type="evidence" value="ECO:0000314"/>
    <property type="project" value="FlyBase"/>
</dbReference>
<dbReference type="GO" id="GO:0046872">
    <property type="term" value="F:metal ion binding"/>
    <property type="evidence" value="ECO:0007669"/>
    <property type="project" value="UniProtKB-KW"/>
</dbReference>
<dbReference type="GO" id="GO:0034353">
    <property type="term" value="F:mRNA 5'-diphosphatase activity"/>
    <property type="evidence" value="ECO:0000314"/>
    <property type="project" value="FlyBase"/>
</dbReference>
<dbReference type="GO" id="GO:0000166">
    <property type="term" value="F:nucleotide binding"/>
    <property type="evidence" value="ECO:0007669"/>
    <property type="project" value="UniProtKB-KW"/>
</dbReference>
<dbReference type="GO" id="GO:0003723">
    <property type="term" value="F:RNA binding"/>
    <property type="evidence" value="ECO:0007669"/>
    <property type="project" value="UniProtKB-KW"/>
</dbReference>
<dbReference type="GO" id="GO:0110152">
    <property type="term" value="F:RNA NAD+-cap (NAD+-forming) hydrolase activity"/>
    <property type="evidence" value="ECO:0007669"/>
    <property type="project" value="RHEA"/>
</dbReference>
<dbReference type="GO" id="GO:0006402">
    <property type="term" value="P:mRNA catabolic process"/>
    <property type="evidence" value="ECO:0000250"/>
    <property type="project" value="FlyBase"/>
</dbReference>
<dbReference type="GO" id="GO:0110155">
    <property type="term" value="P:NAD-cap decapping"/>
    <property type="evidence" value="ECO:0000318"/>
    <property type="project" value="GO_Central"/>
</dbReference>
<dbReference type="GO" id="GO:0000956">
    <property type="term" value="P:nuclear-transcribed mRNA catabolic process"/>
    <property type="evidence" value="ECO:0000318"/>
    <property type="project" value="GO_Central"/>
</dbReference>
<dbReference type="InterPro" id="IPR013961">
    <property type="entry name" value="RAI1"/>
</dbReference>
<dbReference type="InterPro" id="IPR039039">
    <property type="entry name" value="RAI1-like_fam"/>
</dbReference>
<dbReference type="PANTHER" id="PTHR12395:SF9">
    <property type="entry name" value="DECAPPING AND EXORIBONUCLEASE PROTEIN"/>
    <property type="match status" value="1"/>
</dbReference>
<dbReference type="PANTHER" id="PTHR12395">
    <property type="entry name" value="DOM-3 RELATED"/>
    <property type="match status" value="1"/>
</dbReference>
<dbReference type="Pfam" id="PF08652">
    <property type="entry name" value="RAI1"/>
    <property type="match status" value="1"/>
</dbReference>
<organism>
    <name type="scientific">Drosophila melanogaster</name>
    <name type="common">Fruit fly</name>
    <dbReference type="NCBI Taxonomy" id="7227"/>
    <lineage>
        <taxon>Eukaryota</taxon>
        <taxon>Metazoa</taxon>
        <taxon>Ecdysozoa</taxon>
        <taxon>Arthropoda</taxon>
        <taxon>Hexapoda</taxon>
        <taxon>Insecta</taxon>
        <taxon>Pterygota</taxon>
        <taxon>Neoptera</taxon>
        <taxon>Endopterygota</taxon>
        <taxon>Diptera</taxon>
        <taxon>Brachycera</taxon>
        <taxon>Muscomorpha</taxon>
        <taxon>Ephydroidea</taxon>
        <taxon>Drosophilidae</taxon>
        <taxon>Drosophila</taxon>
        <taxon>Sophophora</taxon>
    </lineage>
</organism>
<keyword id="KW-0378">Hydrolase</keyword>
<keyword id="KW-0460">Magnesium</keyword>
<keyword id="KW-0479">Metal-binding</keyword>
<keyword id="KW-0540">Nuclease</keyword>
<keyword id="KW-0547">Nucleotide-binding</keyword>
<keyword id="KW-1185">Reference proteome</keyword>
<keyword id="KW-0694">RNA-binding</keyword>
<gene>
    <name evidence="4 6" type="primary">Rai1</name>
    <name evidence="6" type="ORF">CG9125</name>
</gene>
<reference key="1">
    <citation type="journal article" date="2009" name="Mol. Biol. Evol.">
        <title>The influence of demography and weak selection on the McDonald-Kreitman test: an empirical study in Drosophila.</title>
        <authorList>
            <person name="Parsch J."/>
            <person name="Zhang Z."/>
            <person name="Baines J.F."/>
        </authorList>
    </citation>
    <scope>NUCLEOTIDE SEQUENCE [GENOMIC DNA]</scope>
</reference>
<reference key="2">
    <citation type="journal article" date="2000" name="Science">
        <title>The genome sequence of Drosophila melanogaster.</title>
        <authorList>
            <person name="Adams M.D."/>
            <person name="Celniker S.E."/>
            <person name="Holt R.A."/>
            <person name="Evans C.A."/>
            <person name="Gocayne J.D."/>
            <person name="Amanatides P.G."/>
            <person name="Scherer S.E."/>
            <person name="Li P.W."/>
            <person name="Hoskins R.A."/>
            <person name="Galle R.F."/>
            <person name="George R.A."/>
            <person name="Lewis S.E."/>
            <person name="Richards S."/>
            <person name="Ashburner M."/>
            <person name="Henderson S.N."/>
            <person name="Sutton G.G."/>
            <person name="Wortman J.R."/>
            <person name="Yandell M.D."/>
            <person name="Zhang Q."/>
            <person name="Chen L.X."/>
            <person name="Brandon R.C."/>
            <person name="Rogers Y.-H.C."/>
            <person name="Blazej R.G."/>
            <person name="Champe M."/>
            <person name="Pfeiffer B.D."/>
            <person name="Wan K.H."/>
            <person name="Doyle C."/>
            <person name="Baxter E.G."/>
            <person name="Helt G."/>
            <person name="Nelson C.R."/>
            <person name="Miklos G.L.G."/>
            <person name="Abril J.F."/>
            <person name="Agbayani A."/>
            <person name="An H.-J."/>
            <person name="Andrews-Pfannkoch C."/>
            <person name="Baldwin D."/>
            <person name="Ballew R.M."/>
            <person name="Basu A."/>
            <person name="Baxendale J."/>
            <person name="Bayraktaroglu L."/>
            <person name="Beasley E.M."/>
            <person name="Beeson K.Y."/>
            <person name="Benos P.V."/>
            <person name="Berman B.P."/>
            <person name="Bhandari D."/>
            <person name="Bolshakov S."/>
            <person name="Borkova D."/>
            <person name="Botchan M.R."/>
            <person name="Bouck J."/>
            <person name="Brokstein P."/>
            <person name="Brottier P."/>
            <person name="Burtis K.C."/>
            <person name="Busam D.A."/>
            <person name="Butler H."/>
            <person name="Cadieu E."/>
            <person name="Center A."/>
            <person name="Chandra I."/>
            <person name="Cherry J.M."/>
            <person name="Cawley S."/>
            <person name="Dahlke C."/>
            <person name="Davenport L.B."/>
            <person name="Davies P."/>
            <person name="de Pablos B."/>
            <person name="Delcher A."/>
            <person name="Deng Z."/>
            <person name="Mays A.D."/>
            <person name="Dew I."/>
            <person name="Dietz S.M."/>
            <person name="Dodson K."/>
            <person name="Doup L.E."/>
            <person name="Downes M."/>
            <person name="Dugan-Rocha S."/>
            <person name="Dunkov B.C."/>
            <person name="Dunn P."/>
            <person name="Durbin K.J."/>
            <person name="Evangelista C.C."/>
            <person name="Ferraz C."/>
            <person name="Ferriera S."/>
            <person name="Fleischmann W."/>
            <person name="Fosler C."/>
            <person name="Gabrielian A.E."/>
            <person name="Garg N.S."/>
            <person name="Gelbart W.M."/>
            <person name="Glasser K."/>
            <person name="Glodek A."/>
            <person name="Gong F."/>
            <person name="Gorrell J.H."/>
            <person name="Gu Z."/>
            <person name="Guan P."/>
            <person name="Harris M."/>
            <person name="Harris N.L."/>
            <person name="Harvey D.A."/>
            <person name="Heiman T.J."/>
            <person name="Hernandez J.R."/>
            <person name="Houck J."/>
            <person name="Hostin D."/>
            <person name="Houston K.A."/>
            <person name="Howland T.J."/>
            <person name="Wei M.-H."/>
            <person name="Ibegwam C."/>
            <person name="Jalali M."/>
            <person name="Kalush F."/>
            <person name="Karpen G.H."/>
            <person name="Ke Z."/>
            <person name="Kennison J.A."/>
            <person name="Ketchum K.A."/>
            <person name="Kimmel B.E."/>
            <person name="Kodira C.D."/>
            <person name="Kraft C.L."/>
            <person name="Kravitz S."/>
            <person name="Kulp D."/>
            <person name="Lai Z."/>
            <person name="Lasko P."/>
            <person name="Lei Y."/>
            <person name="Levitsky A.A."/>
            <person name="Li J.H."/>
            <person name="Li Z."/>
            <person name="Liang Y."/>
            <person name="Lin X."/>
            <person name="Liu X."/>
            <person name="Mattei B."/>
            <person name="McIntosh T.C."/>
            <person name="McLeod M.P."/>
            <person name="McPherson D."/>
            <person name="Merkulov G."/>
            <person name="Milshina N.V."/>
            <person name="Mobarry C."/>
            <person name="Morris J."/>
            <person name="Moshrefi A."/>
            <person name="Mount S.M."/>
            <person name="Moy M."/>
            <person name="Murphy B."/>
            <person name="Murphy L."/>
            <person name="Muzny D.M."/>
            <person name="Nelson D.L."/>
            <person name="Nelson D.R."/>
            <person name="Nelson K.A."/>
            <person name="Nixon K."/>
            <person name="Nusskern D.R."/>
            <person name="Pacleb J.M."/>
            <person name="Palazzolo M."/>
            <person name="Pittman G.S."/>
            <person name="Pan S."/>
            <person name="Pollard J."/>
            <person name="Puri V."/>
            <person name="Reese M.G."/>
            <person name="Reinert K."/>
            <person name="Remington K."/>
            <person name="Saunders R.D.C."/>
            <person name="Scheeler F."/>
            <person name="Shen H."/>
            <person name="Shue B.C."/>
            <person name="Siden-Kiamos I."/>
            <person name="Simpson M."/>
            <person name="Skupski M.P."/>
            <person name="Smith T.J."/>
            <person name="Spier E."/>
            <person name="Spradling A.C."/>
            <person name="Stapleton M."/>
            <person name="Strong R."/>
            <person name="Sun E."/>
            <person name="Svirskas R."/>
            <person name="Tector C."/>
            <person name="Turner R."/>
            <person name="Venter E."/>
            <person name="Wang A.H."/>
            <person name="Wang X."/>
            <person name="Wang Z.-Y."/>
            <person name="Wassarman D.A."/>
            <person name="Weinstock G.M."/>
            <person name="Weissenbach J."/>
            <person name="Williams S.M."/>
            <person name="Woodage T."/>
            <person name="Worley K.C."/>
            <person name="Wu D."/>
            <person name="Yang S."/>
            <person name="Yao Q.A."/>
            <person name="Ye J."/>
            <person name="Yeh R.-F."/>
            <person name="Zaveri J.S."/>
            <person name="Zhan M."/>
            <person name="Zhang G."/>
            <person name="Zhao Q."/>
            <person name="Zheng L."/>
            <person name="Zheng X.H."/>
            <person name="Zhong F.N."/>
            <person name="Zhong W."/>
            <person name="Zhou X."/>
            <person name="Zhu S.C."/>
            <person name="Zhu X."/>
            <person name="Smith H.O."/>
            <person name="Gibbs R.A."/>
            <person name="Myers E.W."/>
            <person name="Rubin G.M."/>
            <person name="Venter J.C."/>
        </authorList>
    </citation>
    <scope>NUCLEOTIDE SEQUENCE [LARGE SCALE GENOMIC DNA]</scope>
    <source>
        <strain>Berkeley</strain>
    </source>
</reference>
<reference key="3">
    <citation type="journal article" date="2002" name="Genome Biol.">
        <title>Annotation of the Drosophila melanogaster euchromatic genome: a systematic review.</title>
        <authorList>
            <person name="Misra S."/>
            <person name="Crosby M.A."/>
            <person name="Mungall C.J."/>
            <person name="Matthews B.B."/>
            <person name="Campbell K.S."/>
            <person name="Hradecky P."/>
            <person name="Huang Y."/>
            <person name="Kaminker J.S."/>
            <person name="Millburn G.H."/>
            <person name="Prochnik S.E."/>
            <person name="Smith C.D."/>
            <person name="Tupy J.L."/>
            <person name="Whitfield E.J."/>
            <person name="Bayraktaroglu L."/>
            <person name="Berman B.P."/>
            <person name="Bettencourt B.R."/>
            <person name="Celniker S.E."/>
            <person name="de Grey A.D.N.J."/>
            <person name="Drysdale R.A."/>
            <person name="Harris N.L."/>
            <person name="Richter J."/>
            <person name="Russo S."/>
            <person name="Schroeder A.J."/>
            <person name="Shu S.Q."/>
            <person name="Stapleton M."/>
            <person name="Yamada C."/>
            <person name="Ashburner M."/>
            <person name="Gelbart W.M."/>
            <person name="Rubin G.M."/>
            <person name="Lewis S.E."/>
        </authorList>
    </citation>
    <scope>GENOME REANNOTATION</scope>
    <source>
        <strain>Berkeley</strain>
    </source>
</reference>
<reference key="4">
    <citation type="submission" date="2010-08" db="EMBL/GenBank/DDBJ databases">
        <authorList>
            <person name="Stapleton M."/>
            <person name="Carlson J.W."/>
            <person name="Chavez C."/>
            <person name="Frise E."/>
            <person name="George R.A."/>
            <person name="Pacleb J.M."/>
            <person name="Park S."/>
            <person name="Wan K.H."/>
            <person name="Yu C."/>
            <person name="Celniker S.E."/>
        </authorList>
    </citation>
    <scope>NUCLEOTIDE SEQUENCE [LARGE SCALE MRNA]</scope>
    <source>
        <strain>Berkeley</strain>
    </source>
</reference>
<reference key="5">
    <citation type="journal article" date="2016" name="Mol. Cell">
        <title>Cutoff Suppresses RNA Polymerase II Termination to Ensure Expression of piRNA Precursors.</title>
        <authorList>
            <person name="Chen Y.A."/>
            <person name="Stuwe E."/>
            <person name="Luo Y."/>
            <person name="Ninova M."/>
            <person name="Le Thomas A."/>
            <person name="Rozhavskaya E."/>
            <person name="Li S."/>
            <person name="Vempati S."/>
            <person name="Laver J.D."/>
            <person name="Patel D.J."/>
            <person name="Smibert C.A."/>
            <person name="Lipshitz H.D."/>
            <person name="Toth K.F."/>
            <person name="Aravin A.A."/>
        </authorList>
    </citation>
    <scope>FUNCTION</scope>
    <scope>CATALYTIC ACTIVITY</scope>
    <scope>INTERACTION WITH RAT1</scope>
</reference>
<comment type="function">
    <text evidence="1 3">Decapping enzyme for NAD-capped RNAs: specifically hydrolyzes the nicotinamide adenine dinucleotide (NAD) cap from a subset of RNAs by removing the entire NAD moiety from the 5'-end of an NAD-capped RNA. The NAD-cap is present at the 5'-end of some RNAs and snoRNAs. In contrast to the canonical 5'-end N7 methylguanosine (m7G) cap, the NAD cap promotes mRNA decay. Also acts as a non-canonical decapping enzyme that removes the entire cap structure of m7G capped or incompletely capped RNAs and mediates their subsequent degradation. Specifically degrades pre-mRNAs with a defective 5'-end m7G cap and is part of a pre-mRNA capping quality control. Possesses 5'-pyrophosphohydrolase activity, hydrolyzing the 5'-end triphosphate to release pyrophosphates, and 5'-3' exonuclease activity (PubMed:27292797). May be involved in RNA degradation in the nucleus (PubMed:27292797).</text>
</comment>
<comment type="catalytic activity">
    <reaction evidence="3">
        <text>a 5'-end triphospho-ribonucleoside in mRNA + H2O = a 5'-end phospho-ribonucleoside in mRNA + diphosphate + H(+)</text>
        <dbReference type="Rhea" id="RHEA:78683"/>
        <dbReference type="Rhea" id="RHEA-COMP:15692"/>
        <dbReference type="Rhea" id="RHEA-COMP:17164"/>
        <dbReference type="ChEBI" id="CHEBI:15377"/>
        <dbReference type="ChEBI" id="CHEBI:15378"/>
        <dbReference type="ChEBI" id="CHEBI:33019"/>
        <dbReference type="ChEBI" id="CHEBI:138282"/>
        <dbReference type="ChEBI" id="CHEBI:167618"/>
    </reaction>
    <physiologicalReaction direction="left-to-right" evidence="3">
        <dbReference type="Rhea" id="RHEA:78684"/>
    </physiologicalReaction>
</comment>
<comment type="catalytic activity">
    <reaction evidence="1">
        <text>a 5'-end NAD(+)-phospho-ribonucleoside in mRNA + H2O = a 5'-end phospho-ribonucleoside in mRNA + NAD(+) + H(+)</text>
        <dbReference type="Rhea" id="RHEA:60880"/>
        <dbReference type="Rhea" id="RHEA-COMP:15692"/>
        <dbReference type="Rhea" id="RHEA-COMP:15698"/>
        <dbReference type="ChEBI" id="CHEBI:15377"/>
        <dbReference type="ChEBI" id="CHEBI:15378"/>
        <dbReference type="ChEBI" id="CHEBI:57540"/>
        <dbReference type="ChEBI" id="CHEBI:138282"/>
        <dbReference type="ChEBI" id="CHEBI:144029"/>
    </reaction>
    <physiologicalReaction direction="left-to-right" evidence="1">
        <dbReference type="Rhea" id="RHEA:60881"/>
    </physiologicalReaction>
</comment>
<comment type="catalytic activity">
    <reaction evidence="2">
        <text>a 5'-end (N(7)-methyl 5'-triphosphoguanosine)-ribonucleoside-ribonucleotide in mRNA + H2O = a (N(7)-methyl 5'-triphosphoguanosine)-nucleoside + a 5'-end phospho-ribonucleoside in mRNA + H(+)</text>
        <dbReference type="Rhea" id="RHEA:66928"/>
        <dbReference type="Rhea" id="RHEA-COMP:15692"/>
        <dbReference type="Rhea" id="RHEA-COMP:17313"/>
        <dbReference type="ChEBI" id="CHEBI:15377"/>
        <dbReference type="ChEBI" id="CHEBI:15378"/>
        <dbReference type="ChEBI" id="CHEBI:138282"/>
        <dbReference type="ChEBI" id="CHEBI:172876"/>
        <dbReference type="ChEBI" id="CHEBI:172877"/>
    </reaction>
    <physiologicalReaction direction="left-to-right" evidence="2">
        <dbReference type="Rhea" id="RHEA:66929"/>
    </physiologicalReaction>
</comment>
<comment type="cofactor">
    <cofactor evidence="1">
        <name>Mg(2+)</name>
        <dbReference type="ChEBI" id="CHEBI:18420"/>
    </cofactor>
    <text evidence="1">Binds 2 magnesium ions.</text>
</comment>
<comment type="subunit">
    <text evidence="3">Interacts with Rat1.</text>
</comment>
<comment type="similarity">
    <text evidence="5">Belongs to the DXO/Dom3Z family.</text>
</comment>
<accession>Q9VXA8</accession>
<name>DXO_DROME</name>
<proteinExistence type="evidence at protein level"/>
<feature type="chain" id="PRO_0000406136" description="Decapping and exoribonuclease protein Rai1">
    <location>
        <begin position="1"/>
        <end position="375"/>
    </location>
</feature>
<feature type="binding site" evidence="1">
    <location>
        <position position="43"/>
    </location>
    <ligand>
        <name>substrate</name>
    </ligand>
</feature>
<feature type="binding site" evidence="1">
    <location>
        <begin position="120"/>
        <end position="122"/>
    </location>
    <ligand>
        <name>substrate</name>
    </ligand>
</feature>
<feature type="binding site" evidence="1">
    <location>
        <position position="180"/>
    </location>
    <ligand>
        <name>Mg(2+)</name>
        <dbReference type="ChEBI" id="CHEBI:18420"/>
        <label>1</label>
    </ligand>
</feature>
<feature type="binding site" evidence="1">
    <location>
        <position position="180"/>
    </location>
    <ligand>
        <name>Mg(2+)</name>
        <dbReference type="ChEBI" id="CHEBI:18420"/>
        <label>2</label>
    </ligand>
</feature>
<feature type="binding site" evidence="1">
    <location>
        <position position="222"/>
    </location>
    <ligand>
        <name>Mg(2+)</name>
        <dbReference type="ChEBI" id="CHEBI:18420"/>
        <label>2</label>
    </ligand>
</feature>
<feature type="binding site" evidence="1">
    <location>
        <position position="222"/>
    </location>
    <ligand>
        <name>substrate</name>
    </ligand>
</feature>
<feature type="binding site" evidence="1">
    <location>
        <position position="224"/>
    </location>
    <ligand>
        <name>Mg(2+)</name>
        <dbReference type="ChEBI" id="CHEBI:18420"/>
        <label>1</label>
    </ligand>
</feature>
<feature type="binding site" evidence="1">
    <location>
        <position position="224"/>
    </location>
    <ligand>
        <name>Mg(2+)</name>
        <dbReference type="ChEBI" id="CHEBI:18420"/>
        <label>2</label>
    </ligand>
</feature>
<feature type="binding site" evidence="1">
    <location>
        <position position="247"/>
    </location>
    <ligand>
        <name>Mg(2+)</name>
        <dbReference type="ChEBI" id="CHEBI:18420"/>
        <label>1</label>
    </ligand>
</feature>
<feature type="binding site" evidence="1">
    <location>
        <position position="248"/>
    </location>
    <ligand>
        <name>Mg(2+)</name>
        <dbReference type="ChEBI" id="CHEBI:18420"/>
        <label>1</label>
    </ligand>
</feature>
<feature type="binding site" evidence="1">
    <location>
        <position position="249"/>
    </location>
    <ligand>
        <name>substrate</name>
    </ligand>
</feature>
<feature type="binding site" evidence="1">
    <location>
        <position position="274"/>
    </location>
    <ligand>
        <name>substrate</name>
    </ligand>
</feature>
<evidence type="ECO:0000250" key="1">
    <source>
        <dbReference type="UniProtKB" id="O70348"/>
    </source>
</evidence>
<evidence type="ECO:0000250" key="2">
    <source>
        <dbReference type="UniProtKB" id="O77932"/>
    </source>
</evidence>
<evidence type="ECO:0000269" key="3">
    <source>
    </source>
</evidence>
<evidence type="ECO:0000303" key="4">
    <source>
    </source>
</evidence>
<evidence type="ECO:0000305" key="5"/>
<evidence type="ECO:0000312" key="6">
    <source>
        <dbReference type="FlyBase" id="FBgn0030793"/>
    </source>
</evidence>
<sequence>MAENAGFISVPWGQHKLGAMYNTPFPSISRPKCIGVCSINASREFVDDASCASYLAGQPWPPLPFDLNGGIEDVIRKPVENGKRDLEIMLTYIKQHQKELLRQSSSDARNLRLDSDFVTLRGILRQIMCLQYDNRSFRVKATLLNGNVYMCKEETPEQQLENANMSRAQRVMCSWGFKFEQYLTSAQAQGKPVTNVPVNEAEEFMGVYRTNLAGILMLYGAELDCVDSKEPVDFKDCRVLDSLKFVELKTSVFNMNPHQIRTFKSFKSANWWSQSFLVGITTLYVGLRDTKGMLQRIDEIDVATLARNKPWSASAMAWYLEQFLRNLKKLLVNINDPFAVVQVTFLNKHASYEVLRGPEHQILPNWYRDLLKTRS</sequence>